<keyword id="KW-1043">Host membrane</keyword>
<keyword id="KW-1048">Host nucleus</keyword>
<keyword id="KW-0472">Membrane</keyword>
<keyword id="KW-0479">Metal-binding</keyword>
<keyword id="KW-0597">Phosphoprotein</keyword>
<keyword id="KW-1185">Reference proteome</keyword>
<keyword id="KW-0862">Zinc</keyword>
<keyword id="KW-0863">Zinc-finger</keyword>
<protein>
    <recommendedName>
        <fullName evidence="1">Nuclear egress protein 1</fullName>
    </recommendedName>
</protein>
<dbReference type="EMBL" id="U20824">
    <property type="protein sequence ID" value="AAC13859.1"/>
    <property type="molecule type" value="Genomic_DNA"/>
</dbReference>
<dbReference type="PIR" id="S55666">
    <property type="entry name" value="S55666"/>
</dbReference>
<dbReference type="SMR" id="Q66672"/>
<dbReference type="KEGG" id="vg:1461025"/>
<dbReference type="Proteomes" id="UP000007083">
    <property type="component" value="Segment"/>
</dbReference>
<dbReference type="GO" id="GO:0044201">
    <property type="term" value="C:host cell nuclear inner membrane"/>
    <property type="evidence" value="ECO:0007669"/>
    <property type="project" value="UniProtKB-SubCell"/>
</dbReference>
<dbReference type="GO" id="GO:0016020">
    <property type="term" value="C:membrane"/>
    <property type="evidence" value="ECO:0007669"/>
    <property type="project" value="UniProtKB-KW"/>
</dbReference>
<dbReference type="GO" id="GO:0008270">
    <property type="term" value="F:zinc ion binding"/>
    <property type="evidence" value="ECO:0007669"/>
    <property type="project" value="UniProtKB-KW"/>
</dbReference>
<dbReference type="GO" id="GO:0046765">
    <property type="term" value="P:viral budding from nuclear membrane"/>
    <property type="evidence" value="ECO:0007669"/>
    <property type="project" value="InterPro"/>
</dbReference>
<dbReference type="HAMAP" id="MF_04023">
    <property type="entry name" value="HSV_NEC1"/>
    <property type="match status" value="1"/>
</dbReference>
<dbReference type="InterPro" id="IPR021152">
    <property type="entry name" value="Herpes_UL31"/>
</dbReference>
<dbReference type="Pfam" id="PF02718">
    <property type="entry name" value="Herpes_UL31"/>
    <property type="match status" value="1"/>
</dbReference>
<sequence length="305" mass="34322">MDRERPRKTREPASPGSVLSKRSKLSRKSLALRSLNKFHPYKAPSSVRSLKKAHTLVSNGDFFNGISLNCEFGKDFLREMDTPICTSKVICLPLDVHEIAPGRCLVLSPLGHACNMGFYCEKCTQSGQNSYSQFQGRGGNAKMAAQNSKDDLHSVTLTFYNQVSKVVQNKNFYLSLLSHSLTTIKKSFVQPSLLYSYTVLRALCDDVFPIFKDTENGLCMFALFKTDDLHVSETCLRHLVDNLIHYRVTLDCVKHTYMLKFSPIRAEANGMTIQEVEICEAITGLDFTDEIKQEIISGQELVSEL</sequence>
<name>NEC1_EHV2</name>
<organismHost>
    <name type="scientific">Equus caballus</name>
    <name type="common">Horse</name>
    <dbReference type="NCBI Taxonomy" id="9796"/>
</organismHost>
<evidence type="ECO:0000255" key="1">
    <source>
        <dbReference type="HAMAP-Rule" id="MF_04023"/>
    </source>
</evidence>
<evidence type="ECO:0000256" key="2">
    <source>
        <dbReference type="SAM" id="MobiDB-lite"/>
    </source>
</evidence>
<reference key="1">
    <citation type="journal article" date="1995" name="J. Mol. Biol.">
        <title>The DNA sequence of equine herpesvirus 2.</title>
        <authorList>
            <person name="Telford E.A.R."/>
            <person name="Watson M.S."/>
            <person name="Aird H.C."/>
            <person name="Perry J."/>
            <person name="Davison A.J."/>
        </authorList>
    </citation>
    <scope>NUCLEOTIDE SEQUENCE [LARGE SCALE GENOMIC DNA]</scope>
</reference>
<organism>
    <name type="scientific">Equine herpesvirus 2 (strain 86/87)</name>
    <name type="common">EHV-2</name>
    <dbReference type="NCBI Taxonomy" id="82831"/>
    <lineage>
        <taxon>Viruses</taxon>
        <taxon>Duplodnaviria</taxon>
        <taxon>Heunggongvirae</taxon>
        <taxon>Peploviricota</taxon>
        <taxon>Herviviricetes</taxon>
        <taxon>Herpesvirales</taxon>
        <taxon>Orthoherpesviridae</taxon>
        <taxon>Gammaherpesvirinae</taxon>
        <taxon>Percavirus</taxon>
        <taxon>Percavirus equidgamma2</taxon>
        <taxon>Equid gammaherpesvirus 2</taxon>
    </lineage>
</organism>
<feature type="chain" id="PRO_0000406038" description="Nuclear egress protein 1">
    <location>
        <begin position="1"/>
        <end position="305"/>
    </location>
</feature>
<feature type="zinc finger region" description="CCCH-type" evidence="1">
    <location>
        <begin position="104"/>
        <end position="230"/>
    </location>
</feature>
<feature type="region of interest" description="Disordered" evidence="2">
    <location>
        <begin position="1"/>
        <end position="24"/>
    </location>
</feature>
<feature type="compositionally biased region" description="Basic and acidic residues" evidence="2">
    <location>
        <begin position="1"/>
        <end position="11"/>
    </location>
</feature>
<proteinExistence type="inferred from homology"/>
<comment type="function">
    <text evidence="1">Plays an essential role in virion nuclear egress, the first step of virion release from infected cell. Within the host nucleus, NEC1 interacts with the newly formed capsid through the vertexes and directs it to the inner nuclear membrane by associating with NEC2. Induces the budding of the capsid at the inner nuclear membrane as well as its envelopment into the perinuclear space. There, the NEC1/NEC2 complex promotes the fusion of the enveloped capsid with the outer nuclear membrane and the subsequent release of the viral capsid into the cytoplasm where it will reach the secondary budding sites in the host Golgi or trans-Golgi network.</text>
</comment>
<comment type="subunit">
    <text evidence="1">Forms a heterohexameric complex with NEC2. Interacts with capsid vertex specific component 2/CVC2; this interaction directs the capsid to the host inner nuclear membrane to initiate budding.</text>
</comment>
<comment type="subcellular location">
    <subcellularLocation>
        <location evidence="1">Host nucleus inner membrane</location>
    </subcellularLocation>
    <text evidence="1">Remains attached to the nucleus inner membrane through interaction with NEC2.</text>
</comment>
<comment type="PTM">
    <text evidence="1">Phosphorylated at serine residues in the N-terminus. This phosphorylation regulates the localization within the inner nuclear membrane.</text>
</comment>
<comment type="similarity">
    <text evidence="1">Belongs to the herpesviridae NEC1 protein family.</text>
</comment>
<accession>Q66672</accession>
<gene>
    <name evidence="1" type="primary">NEC1</name>
    <name type="ordered locus">69</name>
</gene>